<protein>
    <recommendedName>
        <fullName>Proteinase-activated receptor 4</fullName>
        <shortName>PAR-4</shortName>
    </recommendedName>
    <alternativeName>
        <fullName>Coagulation factor II receptor-like 3</fullName>
    </alternativeName>
    <alternativeName>
        <fullName>Thrombin receptor-like 3</fullName>
    </alternativeName>
</protein>
<keyword id="KW-0002">3D-structure</keyword>
<keyword id="KW-0094">Blood coagulation</keyword>
<keyword id="KW-1003">Cell membrane</keyword>
<keyword id="KW-1015">Disulfide bond</keyword>
<keyword id="KW-0297">G-protein coupled receptor</keyword>
<keyword id="KW-0325">Glycoprotein</keyword>
<keyword id="KW-0356">Hemostasis</keyword>
<keyword id="KW-0472">Membrane</keyword>
<keyword id="KW-1267">Proteomics identification</keyword>
<keyword id="KW-0675">Receptor</keyword>
<keyword id="KW-1185">Reference proteome</keyword>
<keyword id="KW-0732">Signal</keyword>
<keyword id="KW-0807">Transducer</keyword>
<keyword id="KW-0812">Transmembrane</keyword>
<keyword id="KW-1133">Transmembrane helix</keyword>
<dbReference type="EMBL" id="AF080214">
    <property type="protein sequence ID" value="AAC28860.1"/>
    <property type="molecule type" value="mRNA"/>
</dbReference>
<dbReference type="EMBL" id="AF055917">
    <property type="protein sequence ID" value="AAC25699.1"/>
    <property type="molecule type" value="mRNA"/>
</dbReference>
<dbReference type="EMBL" id="AY431102">
    <property type="protein sequence ID" value="AAR08487.1"/>
    <property type="molecule type" value="mRNA"/>
</dbReference>
<dbReference type="EMBL" id="AF384819">
    <property type="protein sequence ID" value="AAK61908.1"/>
    <property type="molecule type" value="Genomic_DNA"/>
</dbReference>
<dbReference type="EMBL" id="BC074782">
    <property type="protein sequence ID" value="AAH74782.2"/>
    <property type="molecule type" value="mRNA"/>
</dbReference>
<dbReference type="CCDS" id="CCDS12350.1"/>
<dbReference type="RefSeq" id="NP_003941.2">
    <property type="nucleotide sequence ID" value="NM_003950.4"/>
</dbReference>
<dbReference type="PDB" id="2ZPK">
    <property type="method" value="X-ray"/>
    <property type="resolution" value="1.80 A"/>
    <property type="chains" value="P/Q=46-53"/>
</dbReference>
<dbReference type="PDB" id="3QDZ">
    <property type="method" value="X-ray"/>
    <property type="resolution" value="2.80 A"/>
    <property type="chains" value="E/F=39-47"/>
</dbReference>
<dbReference type="PDBsum" id="2ZPK"/>
<dbReference type="PDBsum" id="3QDZ"/>
<dbReference type="SMR" id="Q96RI0"/>
<dbReference type="BioGRID" id="114481">
    <property type="interactions" value="6"/>
</dbReference>
<dbReference type="CORUM" id="Q96RI0"/>
<dbReference type="ELM" id="Q96RI0"/>
<dbReference type="FunCoup" id="Q96RI0">
    <property type="interactions" value="946"/>
</dbReference>
<dbReference type="STRING" id="9606.ENSP00000248076"/>
<dbReference type="BindingDB" id="Q96RI0"/>
<dbReference type="ChEMBL" id="CHEMBL4691"/>
<dbReference type="DrugBank" id="DB11300">
    <property type="generic name" value="Thrombin"/>
</dbReference>
<dbReference type="GuidetoPHARMACOLOGY" id="350"/>
<dbReference type="GlyCosmos" id="Q96RI0">
    <property type="glycosylation" value="1 site, No reported glycans"/>
</dbReference>
<dbReference type="GlyGen" id="Q96RI0">
    <property type="glycosylation" value="4 sites"/>
</dbReference>
<dbReference type="iPTMnet" id="Q96RI0"/>
<dbReference type="PhosphoSitePlus" id="Q96RI0"/>
<dbReference type="BioMuta" id="F2RL3"/>
<dbReference type="DMDM" id="116242700"/>
<dbReference type="jPOST" id="Q96RI0"/>
<dbReference type="MassIVE" id="Q96RI0"/>
<dbReference type="PaxDb" id="9606-ENSP00000248076"/>
<dbReference type="PeptideAtlas" id="Q96RI0"/>
<dbReference type="ProteomicsDB" id="77962"/>
<dbReference type="ABCD" id="Q96RI0">
    <property type="antibodies" value="2 sequenced antibodies"/>
</dbReference>
<dbReference type="Antibodypedia" id="14245">
    <property type="antibodies" value="401 antibodies from 34 providers"/>
</dbReference>
<dbReference type="DNASU" id="9002"/>
<dbReference type="Ensembl" id="ENST00000248076.4">
    <property type="protein sequence ID" value="ENSP00000248076.2"/>
    <property type="gene ID" value="ENSG00000127533.4"/>
</dbReference>
<dbReference type="GeneID" id="9002"/>
<dbReference type="KEGG" id="hsa:9002"/>
<dbReference type="MANE-Select" id="ENST00000248076.4">
    <property type="protein sequence ID" value="ENSP00000248076.2"/>
    <property type="RefSeq nucleotide sequence ID" value="NM_003950.4"/>
    <property type="RefSeq protein sequence ID" value="NP_003941.2"/>
</dbReference>
<dbReference type="UCSC" id="uc002nfa.4">
    <property type="organism name" value="human"/>
</dbReference>
<dbReference type="AGR" id="HGNC:3540"/>
<dbReference type="CTD" id="9002"/>
<dbReference type="DisGeNET" id="9002"/>
<dbReference type="GeneCards" id="F2RL3"/>
<dbReference type="HGNC" id="HGNC:3540">
    <property type="gene designation" value="F2RL3"/>
</dbReference>
<dbReference type="HPA" id="ENSG00000127533">
    <property type="expression patterns" value="Tissue enhanced (adipose tissue, lung, thyroid gland)"/>
</dbReference>
<dbReference type="MIM" id="602779">
    <property type="type" value="gene"/>
</dbReference>
<dbReference type="neXtProt" id="NX_Q96RI0"/>
<dbReference type="OpenTargets" id="ENSG00000127533"/>
<dbReference type="PharmGKB" id="PA27949"/>
<dbReference type="VEuPathDB" id="HostDB:ENSG00000127533"/>
<dbReference type="eggNOG" id="ENOG502QU4Y">
    <property type="taxonomic scope" value="Eukaryota"/>
</dbReference>
<dbReference type="GeneTree" id="ENSGT01050000244840"/>
<dbReference type="HOGENOM" id="CLU_009579_8_2_1"/>
<dbReference type="InParanoid" id="Q96RI0"/>
<dbReference type="OMA" id="WGNLYGA"/>
<dbReference type="OrthoDB" id="8716763at2759"/>
<dbReference type="PAN-GO" id="Q96RI0">
    <property type="GO annotations" value="4 GO annotations based on evolutionary models"/>
</dbReference>
<dbReference type="PhylomeDB" id="Q96RI0"/>
<dbReference type="TreeFam" id="TF350010"/>
<dbReference type="PathwayCommons" id="Q96RI0"/>
<dbReference type="Reactome" id="R-HSA-375276">
    <property type="pathway name" value="Peptide ligand-binding receptors"/>
</dbReference>
<dbReference type="Reactome" id="R-HSA-416476">
    <property type="pathway name" value="G alpha (q) signalling events"/>
</dbReference>
<dbReference type="Reactome" id="R-HSA-456926">
    <property type="pathway name" value="Thrombin signalling through proteinase activated receptors (PARs)"/>
</dbReference>
<dbReference type="SignaLink" id="Q96RI0"/>
<dbReference type="SIGNOR" id="Q96RI0"/>
<dbReference type="BioGRID-ORCS" id="9002">
    <property type="hits" value="8 hits in 1154 CRISPR screens"/>
</dbReference>
<dbReference type="EvolutionaryTrace" id="Q96RI0"/>
<dbReference type="GeneWiki" id="F2RL3"/>
<dbReference type="GenomeRNAi" id="9002"/>
<dbReference type="Pharos" id="Q96RI0">
    <property type="development level" value="Tchem"/>
</dbReference>
<dbReference type="PRO" id="PR:Q96RI0"/>
<dbReference type="Proteomes" id="UP000005640">
    <property type="component" value="Chromosome 19"/>
</dbReference>
<dbReference type="RNAct" id="Q96RI0">
    <property type="molecule type" value="protein"/>
</dbReference>
<dbReference type="Bgee" id="ENSG00000127533">
    <property type="expression patterns" value="Expressed in right lung and 93 other cell types or tissues"/>
</dbReference>
<dbReference type="ExpressionAtlas" id="Q96RI0">
    <property type="expression patterns" value="baseline and differential"/>
</dbReference>
<dbReference type="GO" id="GO:0005576">
    <property type="term" value="C:extracellular region"/>
    <property type="evidence" value="ECO:0000304"/>
    <property type="project" value="Reactome"/>
</dbReference>
<dbReference type="GO" id="GO:0005886">
    <property type="term" value="C:plasma membrane"/>
    <property type="evidence" value="ECO:0000314"/>
    <property type="project" value="HPA"/>
</dbReference>
<dbReference type="GO" id="GO:0004930">
    <property type="term" value="F:G protein-coupled receptor activity"/>
    <property type="evidence" value="ECO:0000318"/>
    <property type="project" value="GO_Central"/>
</dbReference>
<dbReference type="GO" id="GO:0002020">
    <property type="term" value="F:protease binding"/>
    <property type="evidence" value="ECO:0000353"/>
    <property type="project" value="UniProtKB"/>
</dbReference>
<dbReference type="GO" id="GO:0015057">
    <property type="term" value="F:thrombin-activated receptor activity"/>
    <property type="evidence" value="ECO:0000304"/>
    <property type="project" value="ProtInc"/>
</dbReference>
<dbReference type="GO" id="GO:0007596">
    <property type="term" value="P:blood coagulation"/>
    <property type="evidence" value="ECO:0000304"/>
    <property type="project" value="ProtInc"/>
</dbReference>
<dbReference type="GO" id="GO:0007186">
    <property type="term" value="P:G protein-coupled receptor signaling pathway"/>
    <property type="evidence" value="ECO:0000318"/>
    <property type="project" value="GO_Central"/>
</dbReference>
<dbReference type="GO" id="GO:0007200">
    <property type="term" value="P:phospholipase C-activating G protein-coupled receptor signaling pathway"/>
    <property type="evidence" value="ECO:0000304"/>
    <property type="project" value="ProtInc"/>
</dbReference>
<dbReference type="GO" id="GO:0030168">
    <property type="term" value="P:platelet activation"/>
    <property type="evidence" value="ECO:0000314"/>
    <property type="project" value="UniProtKB"/>
</dbReference>
<dbReference type="GO" id="GO:0070527">
    <property type="term" value="P:platelet aggregation"/>
    <property type="evidence" value="ECO:0007669"/>
    <property type="project" value="Ensembl"/>
</dbReference>
<dbReference type="GO" id="GO:0060155">
    <property type="term" value="P:platelet dense granule organization"/>
    <property type="evidence" value="ECO:0000305"/>
    <property type="project" value="BHF-UCL"/>
</dbReference>
<dbReference type="GO" id="GO:0051281">
    <property type="term" value="P:positive regulation of release of sequestered calcium ion into cytosol"/>
    <property type="evidence" value="ECO:0000314"/>
    <property type="project" value="BHF-UCL"/>
</dbReference>
<dbReference type="GO" id="GO:0009611">
    <property type="term" value="P:response to wounding"/>
    <property type="evidence" value="ECO:0000304"/>
    <property type="project" value="ProtInc"/>
</dbReference>
<dbReference type="GO" id="GO:0007165">
    <property type="term" value="P:signal transduction"/>
    <property type="evidence" value="ECO:0000304"/>
    <property type="project" value="ProtInc"/>
</dbReference>
<dbReference type="FunFam" id="1.20.1070.10:FF:000230">
    <property type="entry name" value="F2R-like thrombin or trypsin receptor 3"/>
    <property type="match status" value="1"/>
</dbReference>
<dbReference type="Gene3D" id="1.20.1070.10">
    <property type="entry name" value="Rhodopsin 7-helix transmembrane proteins"/>
    <property type="match status" value="1"/>
</dbReference>
<dbReference type="InterPro" id="IPR000276">
    <property type="entry name" value="GPCR_Rhodpsn"/>
</dbReference>
<dbReference type="InterPro" id="IPR017452">
    <property type="entry name" value="GPCR_Rhodpsn_7TM"/>
</dbReference>
<dbReference type="InterPro" id="IPR003944">
    <property type="entry name" value="Prot_act_rcpt_4"/>
</dbReference>
<dbReference type="InterPro" id="IPR003912">
    <property type="entry name" value="Protea_act_rcpt"/>
</dbReference>
<dbReference type="PANTHER" id="PTHR24232">
    <property type="entry name" value="G-PROTEIN COUPLED RECEPTOR"/>
    <property type="match status" value="1"/>
</dbReference>
<dbReference type="PANTHER" id="PTHR24232:SF22">
    <property type="entry name" value="PROTEINASE-ACTIVATED RECEPTOR 4"/>
    <property type="match status" value="1"/>
</dbReference>
<dbReference type="Pfam" id="PF00001">
    <property type="entry name" value="7tm_1"/>
    <property type="match status" value="1"/>
</dbReference>
<dbReference type="PRINTS" id="PR00237">
    <property type="entry name" value="GPCRRHODOPSN"/>
</dbReference>
<dbReference type="PRINTS" id="PR01428">
    <property type="entry name" value="PROTEASEAR"/>
</dbReference>
<dbReference type="PRINTS" id="PR01430">
    <property type="entry name" value="PROTEASEAR4"/>
</dbReference>
<dbReference type="SUPFAM" id="SSF81321">
    <property type="entry name" value="Family A G protein-coupled receptor-like"/>
    <property type="match status" value="1"/>
</dbReference>
<dbReference type="PROSITE" id="PS00237">
    <property type="entry name" value="G_PROTEIN_RECEP_F1_1"/>
    <property type="match status" value="1"/>
</dbReference>
<dbReference type="PROSITE" id="PS50262">
    <property type="entry name" value="G_PROTEIN_RECEP_F1_2"/>
    <property type="match status" value="1"/>
</dbReference>
<proteinExistence type="evidence at protein level"/>
<organism>
    <name type="scientific">Homo sapiens</name>
    <name type="common">Human</name>
    <dbReference type="NCBI Taxonomy" id="9606"/>
    <lineage>
        <taxon>Eukaryota</taxon>
        <taxon>Metazoa</taxon>
        <taxon>Chordata</taxon>
        <taxon>Craniata</taxon>
        <taxon>Vertebrata</taxon>
        <taxon>Euteleostomi</taxon>
        <taxon>Mammalia</taxon>
        <taxon>Eutheria</taxon>
        <taxon>Euarchontoglires</taxon>
        <taxon>Primates</taxon>
        <taxon>Haplorrhini</taxon>
        <taxon>Catarrhini</taxon>
        <taxon>Hominidae</taxon>
        <taxon>Homo</taxon>
    </lineage>
</organism>
<gene>
    <name type="primary">F2RL3</name>
    <name type="synonym">PAR4</name>
</gene>
<evidence type="ECO:0000250" key="1"/>
<evidence type="ECO:0000255" key="2"/>
<evidence type="ECO:0000255" key="3">
    <source>
        <dbReference type="PROSITE-ProRule" id="PRU00521"/>
    </source>
</evidence>
<evidence type="ECO:0000256" key="4">
    <source>
        <dbReference type="SAM" id="MobiDB-lite"/>
    </source>
</evidence>
<evidence type="ECO:0000269" key="5">
    <source>
    </source>
</evidence>
<evidence type="ECO:0000269" key="6">
    <source>
    </source>
</evidence>
<evidence type="ECO:0000269" key="7">
    <source>
    </source>
</evidence>
<evidence type="ECO:0000269" key="8">
    <source>
    </source>
</evidence>
<evidence type="ECO:0000269" key="9">
    <source>
    </source>
</evidence>
<evidence type="ECO:0000269" key="10">
    <source ref="5"/>
</evidence>
<evidence type="ECO:0007829" key="11">
    <source>
        <dbReference type="PDB" id="3QDZ"/>
    </source>
</evidence>
<comment type="function">
    <text evidence="5">Receptor for activated thrombin or trypsin coupled to G proteins that stimulate phosphoinositide hydrolysis (PubMed:10079109). May play a role in platelets activation (PubMed:10079109).</text>
</comment>
<comment type="activity regulation">
    <text evidence="6">Activated upon interaction by mucunain, a cowhage (Mucuna pruriens) plant cysteine proteinase.</text>
</comment>
<comment type="subcellular location">
    <subcellularLocation>
        <location>Cell membrane</location>
        <topology>Multi-pass membrane protein</topology>
    </subcellularLocation>
</comment>
<comment type="tissue specificity">
    <text>Widely expressed, with highest levels in lung, pancreas, thyroid, testis and small intestine. Not expressed in brain, kidney, spinal cord and peripheral blood leukocytes. Also detected in platelets.</text>
</comment>
<comment type="PTM">
    <text>A proteolytic cleavage generates a new N-terminus that functions as a tethered ligand.</text>
</comment>
<comment type="similarity">
    <text evidence="3">Belongs to the G-protein coupled receptor 1 family.</text>
</comment>
<name>PAR4_HUMAN</name>
<feature type="signal peptide" evidence="2">
    <location>
        <begin position="1"/>
        <end position="17"/>
    </location>
</feature>
<feature type="propeptide" id="PRO_0000012762" description="Removed for receptor activation" evidence="1">
    <location>
        <begin position="18"/>
        <end position="47"/>
    </location>
</feature>
<feature type="chain" id="PRO_0000012763" description="Proteinase-activated receptor 4">
    <location>
        <begin position="48"/>
        <end position="385"/>
    </location>
</feature>
<feature type="topological domain" description="Extracellular" evidence="2">
    <location>
        <begin position="48"/>
        <end position="82"/>
    </location>
</feature>
<feature type="transmembrane region" description="Helical; Name=1" evidence="2">
    <location>
        <begin position="83"/>
        <end position="103"/>
    </location>
</feature>
<feature type="topological domain" description="Cytoplasmic" evidence="2">
    <location>
        <begin position="104"/>
        <end position="108"/>
    </location>
</feature>
<feature type="transmembrane region" description="Helical; Name=2" evidence="2">
    <location>
        <begin position="109"/>
        <end position="129"/>
    </location>
</feature>
<feature type="topological domain" description="Extracellular" evidence="2">
    <location>
        <begin position="130"/>
        <end position="151"/>
    </location>
</feature>
<feature type="transmembrane region" description="Helical; Name=3" evidence="2">
    <location>
        <begin position="152"/>
        <end position="172"/>
    </location>
</feature>
<feature type="topological domain" description="Cytoplasmic" evidence="2">
    <location>
        <begin position="173"/>
        <end position="192"/>
    </location>
</feature>
<feature type="transmembrane region" description="Helical; Name=4" evidence="2">
    <location>
        <begin position="193"/>
        <end position="213"/>
    </location>
</feature>
<feature type="topological domain" description="Extracellular" evidence="2">
    <location>
        <begin position="214"/>
        <end position="247"/>
    </location>
</feature>
<feature type="transmembrane region" description="Helical; Name=5" evidence="2">
    <location>
        <begin position="248"/>
        <end position="268"/>
    </location>
</feature>
<feature type="topological domain" description="Cytoplasmic" evidence="2">
    <location>
        <begin position="269"/>
        <end position="283"/>
    </location>
</feature>
<feature type="transmembrane region" description="Helical; Name=6" evidence="2">
    <location>
        <begin position="284"/>
        <end position="304"/>
    </location>
</feature>
<feature type="topological domain" description="Extracellular" evidence="2">
    <location>
        <begin position="305"/>
        <end position="319"/>
    </location>
</feature>
<feature type="transmembrane region" description="Helical; Name=7" evidence="2">
    <location>
        <begin position="320"/>
        <end position="343"/>
    </location>
</feature>
<feature type="topological domain" description="Cytoplasmic" evidence="2">
    <location>
        <begin position="344"/>
        <end position="385"/>
    </location>
</feature>
<feature type="region of interest" description="Disordered" evidence="4">
    <location>
        <begin position="21"/>
        <end position="42"/>
    </location>
</feature>
<feature type="region of interest" description="Disordered" evidence="4">
    <location>
        <begin position="362"/>
        <end position="385"/>
    </location>
</feature>
<feature type="site" description="Cleavage; by thrombin or trypsin" evidence="1">
    <location>
        <begin position="47"/>
        <end position="48"/>
    </location>
</feature>
<feature type="glycosylation site" description="N-linked (GlcNAc...) asparagine" evidence="2">
    <location>
        <position position="56"/>
    </location>
</feature>
<feature type="disulfide bond" evidence="3">
    <location>
        <begin position="149"/>
        <end position="228"/>
    </location>
</feature>
<feature type="sequence variant" id="VAR_028300" description="In dbSNP:rs773902." evidence="7 8 9">
    <original>A</original>
    <variation>T</variation>
    <location>
        <position position="120"/>
    </location>
</feature>
<feature type="sequence variant" id="VAR_028301" description="In dbSNP:rs2230799.">
    <original>R</original>
    <variation>Q</variation>
    <location>
        <position position="215"/>
    </location>
</feature>
<feature type="sequence variant" id="VAR_012852" description="In dbSNP:rs2227346." evidence="10">
    <original>F</original>
    <variation>V</variation>
    <location>
        <position position="296"/>
    </location>
</feature>
<feature type="sequence variant" id="VAR_012853" description="In dbSNP:rs2227376." evidence="10">
    <original>P</original>
    <variation>L</variation>
    <location>
        <position position="310"/>
    </location>
</feature>
<feature type="mutagenesis site" description="No proteolytic cleavage (by thrombin or trypsin)." evidence="7">
    <original>R</original>
    <variation>A</variation>
    <location>
        <position position="47"/>
    </location>
</feature>
<feature type="mutagenesis site" description="No effect on receptor activation." evidence="7">
    <original>R</original>
    <variation>A</variation>
    <location>
        <position position="68"/>
    </location>
</feature>
<feature type="strand" evidence="11">
    <location>
        <begin position="44"/>
        <end position="46"/>
    </location>
</feature>
<accession>Q96RI0</accession>
<accession>O76067</accession>
<accession>Q6DK42</accession>
<reference key="1">
    <citation type="journal article" date="1998" name="J. Biol. Chem.">
        <title>Gene and locus structure and chromosomal localization of the protease-activated receptor gene family.</title>
        <authorList>
            <person name="Kahn M.L."/>
            <person name="Hammes S.R."/>
            <person name="Botka C."/>
            <person name="Coughlin S.R."/>
        </authorList>
    </citation>
    <scope>NUCLEOTIDE SEQUENCE [MRNA]</scope>
    <scope>VARIANT THR-120</scope>
</reference>
<reference key="2">
    <citation type="journal article" date="1998" name="Nature">
        <title>A dual thrombin receptor system for platelet activation.</title>
        <authorList>
            <person name="Kahn M.L."/>
            <person name="Zheng Y.-W."/>
            <person name="Huang W."/>
            <person name="Bigornia V."/>
            <person name="Zeng D."/>
            <person name="Moff S."/>
            <person name="Farese R.V. Jr."/>
            <person name="Tam C."/>
            <person name="Coughlin S.R."/>
        </authorList>
    </citation>
    <scope>NUCLEOTIDE SEQUENCE [MRNA]</scope>
    <scope>VARIANT THR-120</scope>
</reference>
<reference key="3">
    <citation type="journal article" date="1998" name="Proc. Natl. Acad. Sci. U.S.A.">
        <title>Cloning and characterization of human protease-activated receptor 4.</title>
        <authorList>
            <person name="Xu W.-F."/>
            <person name="Andersen H."/>
            <person name="Whitmore T.E."/>
            <person name="Presnell S.R."/>
            <person name="Yee D.P."/>
            <person name="Ching A."/>
            <person name="Gilbert T."/>
            <person name="Davie E.W."/>
            <person name="Foster D.C."/>
        </authorList>
    </citation>
    <scope>NUCLEOTIDE SEQUENCE [MRNA]</scope>
    <scope>MUTAGENESIS OF ARG-47 AND ARG-68</scope>
    <scope>VARIANT THR-120</scope>
    <source>
        <tissue>Lymphoma</tissue>
    </source>
</reference>
<reference key="4">
    <citation type="submission" date="2003-10" db="EMBL/GenBank/DDBJ databases">
        <title>cDNA clones of human proteins involved in signal transduction sequenced by the Guthrie cDNA resource center (www.cdna.org).</title>
        <authorList>
            <person name="King M.M."/>
            <person name="Aronstam R.S."/>
            <person name="Sharma S.V."/>
        </authorList>
    </citation>
    <scope>NUCLEOTIDE SEQUENCE [LARGE SCALE MRNA]</scope>
    <source>
        <tissue>Lung</tissue>
    </source>
</reference>
<reference key="5">
    <citation type="submission" date="2001-06" db="EMBL/GenBank/DDBJ databases">
        <authorList>
            <consortium name="SeattleSNPs variation discovery resource"/>
        </authorList>
    </citation>
    <scope>NUCLEOTIDE SEQUENCE [GENOMIC DNA]</scope>
    <scope>VARIANTS VAL-296 AND LEU-310</scope>
</reference>
<reference key="6">
    <citation type="journal article" date="2004" name="Genome Res.">
        <title>The status, quality, and expansion of the NIH full-length cDNA project: the Mammalian Gene Collection (MGC).</title>
        <authorList>
            <consortium name="The MGC Project Team"/>
        </authorList>
    </citation>
    <scope>NUCLEOTIDE SEQUENCE [LARGE SCALE MRNA]</scope>
</reference>
<reference key="7">
    <citation type="journal article" date="1999" name="J. Clin. Invest.">
        <title>Protease-activated receptors 1 and 4 mediate activation of human platelets by thrombin.</title>
        <authorList>
            <person name="Kahn M.L."/>
            <person name="Nakanishi-Matsui M."/>
            <person name="Shapiro M.J."/>
            <person name="Ishihara H."/>
            <person name="Coughlin S.R."/>
        </authorList>
    </citation>
    <scope>FUNCTION</scope>
</reference>
<reference key="8">
    <citation type="journal article" date="2008" name="J. Neurosci.">
        <title>Cowhage-evoked itch is mediated by a novel cysteine protease: a ligand of protease-activated receptors.</title>
        <authorList>
            <person name="Reddy V.B."/>
            <person name="Iuga A.O."/>
            <person name="Shimada S.G."/>
            <person name="LaMotte R.H."/>
            <person name="Lerner E.A."/>
        </authorList>
    </citation>
    <scope>ACTIVITY REGULATION</scope>
</reference>
<sequence>MWGRLLLWPLVLGFSLSGGTQTPSVYDESGSTGGGDDSTPSILPAPRGYPGQVCANDSDTLELPDSSRALLLGWVPTRLVPALYGLVLVVGLPANGLALWVLATQAPRLPSTMLLMNLAAADLLLALALPPRIAYHLRGQRWPFGEAACRLATAALYGHMYGSVLLLAAVSLDRYLALVHPLRARALRGRRLALGLCMAAWLMAAALALPLTLQRQTFRLARSDRVLCHDALPLDAQASHWQPAFTCLALLGCFLPLLAMLLCYGATLHTLAASGRRYGHALRLTAVVLASAVAFFVPSNLLLLLHYSDPSPSAWGNLYGAYVPSLALSTLNSCVDPFIYYYVSAEFRDKVRAGLFQRSPGDTVASKASAEGGSRGMGTHSSLLQ</sequence>